<feature type="chain" id="PRO_0000215570" description="Dihydroflavonol 4-reductase">
    <location>
        <begin position="1" status="less than"/>
        <end position="217" status="greater than"/>
    </location>
</feature>
<feature type="binding site" evidence="1">
    <location>
        <position position="27"/>
    </location>
    <ligand>
        <name>NADP(+)</name>
        <dbReference type="ChEBI" id="CHEBI:58349"/>
    </ligand>
</feature>
<feature type="binding site" evidence="1">
    <location>
        <position position="146"/>
    </location>
    <ligand>
        <name>NADP(+)</name>
        <dbReference type="ChEBI" id="CHEBI:58349"/>
    </ligand>
</feature>
<feature type="non-terminal residue">
    <location>
        <position position="1"/>
    </location>
</feature>
<feature type="non-terminal residue">
    <location>
        <position position="217"/>
    </location>
</feature>
<reference key="1">
    <citation type="journal article" date="1995" name="Plant Mol. Biol.">
        <title>Molecular characterization and expression of alfalfa (Medicago sativa L.) flavanone-3-hydroxylase and dihydroflavonol-4-reductase encoding genes.</title>
        <authorList>
            <person name="Charrier B."/>
            <person name="Coronado C."/>
            <person name="Kondorosi A."/>
            <person name="Ratet P."/>
        </authorList>
    </citation>
    <scope>NUCLEOTIDE SEQUENCE [MRNA]</scope>
    <source>
        <strain>cv. Varia A2</strain>
    </source>
</reference>
<sequence length="217" mass="24389">GSWLVMRLMEPGYMVRATVRDPENLKKVSPLLELPGAKSKLSIWKADLGEEGSFDEAIKGCTGVFHVATPMDFESKDPENEMIKPTIKGVLDIMKACLKAKTVRRLIYTSSAGTLNVTEDQKPLWDESCWSDVEFCRRVKMTGWMYFVSKTLAEQEAWKFAKEHKMDVITIIPPLVVGPFLIPTMPPSLITALSPITGNEAHYSIIKQGQYVHLDDL</sequence>
<name>DFRA_MEDSA</name>
<proteinExistence type="evidence at transcript level"/>
<protein>
    <recommendedName>
        <fullName>Dihydroflavonol 4-reductase</fullName>
        <shortName>DFR</shortName>
        <ecNumber evidence="2">1.1.1.219</ecNumber>
    </recommendedName>
    <alternativeName>
        <fullName>Dihydrokaempferol 4-reductase</fullName>
    </alternativeName>
    <alternativeName>
        <fullName>Flavanone 4-reductase</fullName>
        <shortName>FNR</shortName>
        <ecNumber evidence="2">1.1.1.234</ecNumber>
    </alternativeName>
</protein>
<keyword id="KW-0284">Flavonoid biosynthesis</keyword>
<keyword id="KW-0521">NADP</keyword>
<keyword id="KW-0560">Oxidoreductase</keyword>
<dbReference type="EC" id="1.1.1.219" evidence="2"/>
<dbReference type="EC" id="1.1.1.234" evidence="2"/>
<dbReference type="EMBL" id="X80222">
    <property type="protein sequence ID" value="CAA56508.1"/>
    <property type="molecule type" value="mRNA"/>
</dbReference>
<dbReference type="PIR" id="S61416">
    <property type="entry name" value="S61416"/>
</dbReference>
<dbReference type="SMR" id="P51109"/>
<dbReference type="UniPathway" id="UPA00009"/>
<dbReference type="GO" id="GO:0045552">
    <property type="term" value="F:dihydrokaempferol 4-reductase activity"/>
    <property type="evidence" value="ECO:0007669"/>
    <property type="project" value="UniProtKB-EC"/>
</dbReference>
<dbReference type="GO" id="GO:0047890">
    <property type="term" value="F:flavanone 4-reductase activity"/>
    <property type="evidence" value="ECO:0007669"/>
    <property type="project" value="UniProtKB-EC"/>
</dbReference>
<dbReference type="GO" id="GO:0009718">
    <property type="term" value="P:anthocyanin-containing compound biosynthetic process"/>
    <property type="evidence" value="ECO:0007669"/>
    <property type="project" value="UniProtKB-UniPathway"/>
</dbReference>
<dbReference type="CDD" id="cd08958">
    <property type="entry name" value="FR_SDR_e"/>
    <property type="match status" value="1"/>
</dbReference>
<dbReference type="FunFam" id="3.40.50.720:FF:000085">
    <property type="entry name" value="Dihydroflavonol reductase"/>
    <property type="match status" value="1"/>
</dbReference>
<dbReference type="Gene3D" id="3.40.50.720">
    <property type="entry name" value="NAD(P)-binding Rossmann-like Domain"/>
    <property type="match status" value="1"/>
</dbReference>
<dbReference type="InterPro" id="IPR001509">
    <property type="entry name" value="Epimerase_deHydtase"/>
</dbReference>
<dbReference type="InterPro" id="IPR036291">
    <property type="entry name" value="NAD(P)-bd_dom_sf"/>
</dbReference>
<dbReference type="InterPro" id="IPR050425">
    <property type="entry name" value="NAD(P)_dehydrat-like"/>
</dbReference>
<dbReference type="PANTHER" id="PTHR10366:SF805">
    <property type="entry name" value="DIHYDROFLAVANOL-4-REDUCTASE 1"/>
    <property type="match status" value="1"/>
</dbReference>
<dbReference type="PANTHER" id="PTHR10366">
    <property type="entry name" value="NAD DEPENDENT EPIMERASE/DEHYDRATASE"/>
    <property type="match status" value="1"/>
</dbReference>
<dbReference type="Pfam" id="PF01370">
    <property type="entry name" value="Epimerase"/>
    <property type="match status" value="1"/>
</dbReference>
<dbReference type="SUPFAM" id="SSF51735">
    <property type="entry name" value="NAD(P)-binding Rossmann-fold domains"/>
    <property type="match status" value="1"/>
</dbReference>
<accession>P51109</accession>
<organism>
    <name type="scientific">Medicago sativa</name>
    <name type="common">Alfalfa</name>
    <dbReference type="NCBI Taxonomy" id="3879"/>
    <lineage>
        <taxon>Eukaryota</taxon>
        <taxon>Viridiplantae</taxon>
        <taxon>Streptophyta</taxon>
        <taxon>Embryophyta</taxon>
        <taxon>Tracheophyta</taxon>
        <taxon>Spermatophyta</taxon>
        <taxon>Magnoliopsida</taxon>
        <taxon>eudicotyledons</taxon>
        <taxon>Gunneridae</taxon>
        <taxon>Pentapetalae</taxon>
        <taxon>rosids</taxon>
        <taxon>fabids</taxon>
        <taxon>Fabales</taxon>
        <taxon>Fabaceae</taxon>
        <taxon>Papilionoideae</taxon>
        <taxon>50 kb inversion clade</taxon>
        <taxon>NPAAA clade</taxon>
        <taxon>Hologalegina</taxon>
        <taxon>IRL clade</taxon>
        <taxon>Trifolieae</taxon>
        <taxon>Medicago</taxon>
    </lineage>
</organism>
<comment type="function">
    <text evidence="2">Bifunctional enzyme involved in flavonoid metabolism.</text>
</comment>
<comment type="catalytic activity">
    <reaction evidence="2">
        <text>a (2R,3S,4S)-leucoanthocyanidin + NADP(+) = a (2R,3R)-dihydroflavonol + NADPH + H(+)</text>
        <dbReference type="Rhea" id="RHEA:54444"/>
        <dbReference type="ChEBI" id="CHEBI:15378"/>
        <dbReference type="ChEBI" id="CHEBI:57783"/>
        <dbReference type="ChEBI" id="CHEBI:58349"/>
        <dbReference type="ChEBI" id="CHEBI:138176"/>
        <dbReference type="ChEBI" id="CHEBI:138188"/>
        <dbReference type="EC" id="1.1.1.219"/>
    </reaction>
</comment>
<comment type="catalytic activity">
    <reaction evidence="2">
        <text>(2S)-flavan-4-ol + NADP(+) = (2S)-flavanone + NADPH + H(+)</text>
        <dbReference type="Rhea" id="RHEA:11228"/>
        <dbReference type="ChEBI" id="CHEBI:15378"/>
        <dbReference type="ChEBI" id="CHEBI:15605"/>
        <dbReference type="ChEBI" id="CHEBI:15606"/>
        <dbReference type="ChEBI" id="CHEBI:57783"/>
        <dbReference type="ChEBI" id="CHEBI:58349"/>
        <dbReference type="EC" id="1.1.1.234"/>
    </reaction>
</comment>
<comment type="pathway">
    <text>Pigment biosynthesis; anthocyanin biosynthesis.</text>
</comment>
<comment type="similarity">
    <text evidence="3">Belongs to the NAD(P)-dependent epimerase/dehydratase family. Dihydroflavonol-4-reductase subfamily.</text>
</comment>
<gene>
    <name type="primary">DFR1</name>
</gene>
<evidence type="ECO:0000250" key="1">
    <source>
        <dbReference type="UniProtKB" id="A0A059TC02"/>
    </source>
</evidence>
<evidence type="ECO:0000250" key="2">
    <source>
        <dbReference type="UniProtKB" id="Q9XES5"/>
    </source>
</evidence>
<evidence type="ECO:0000305" key="3"/>